<comment type="function">
    <text evidence="1">Catalyzes the formation of N(4)-acetylcytidine (ac(4)C) at the wobble position of elongator tRNA(Met), using acetate and ATP as substrates. First activates an acetate ion to form acetyladenylate (Ac-AMP) and then transfers the acetyl group to tRNA to form ac(4)C34.</text>
</comment>
<comment type="catalytic activity">
    <reaction evidence="1">
        <text>cytidine(34) in elongator tRNA(Met) + acetate + ATP = N(4)-acetylcytidine(34) in elongator tRNA(Met) + AMP + diphosphate</text>
        <dbReference type="Rhea" id="RHEA:58144"/>
        <dbReference type="Rhea" id="RHEA-COMP:10693"/>
        <dbReference type="Rhea" id="RHEA-COMP:10694"/>
        <dbReference type="ChEBI" id="CHEBI:30089"/>
        <dbReference type="ChEBI" id="CHEBI:30616"/>
        <dbReference type="ChEBI" id="CHEBI:33019"/>
        <dbReference type="ChEBI" id="CHEBI:74900"/>
        <dbReference type="ChEBI" id="CHEBI:82748"/>
        <dbReference type="ChEBI" id="CHEBI:456215"/>
    </reaction>
</comment>
<comment type="subcellular location">
    <subcellularLocation>
        <location evidence="1">Cytoplasm</location>
    </subcellularLocation>
</comment>
<comment type="similarity">
    <text evidence="1">Belongs to the TmcAL family.</text>
</comment>
<sequence length="366" mass="41662">MQACAVIAEFNPFHNGHQYLLEQARKVTKADLVIVIMSGNFVQRGEPALINKWERARVAINCGADLVVEIPTEYAIDSAKEFAHAGVEIAQKLGASFLAFGSENPDLDFENESKILDRQFDQRAKKYNQNFAAQLFDDTAIMNSNDILGINYAYWNSKSKRGLQLIPLQREQADHRDTEIKGSIASASAIRRAALEQSEYFNAVPKASLKAIRNAKLTSWEDFWIMLNYRLLTSTPQELRHIKGVTEGFENRILNLVDKSNSFTELMQKLKTKRYTYTRIQRSLTNILLNIQATPFNLTKTRLLATNQLGRIFIREAALGSVVMTKVTKEDFENNYAITKRADDLYQLVSPYQWGKGPIIKKNVKE</sequence>
<keyword id="KW-0067">ATP-binding</keyword>
<keyword id="KW-0963">Cytoplasm</keyword>
<keyword id="KW-0436">Ligase</keyword>
<keyword id="KW-0547">Nucleotide-binding</keyword>
<keyword id="KW-0694">RNA-binding</keyword>
<keyword id="KW-0819">tRNA processing</keyword>
<keyword id="KW-0820">tRNA-binding</keyword>
<accession>Q03GA1</accession>
<organism>
    <name type="scientific">Pediococcus pentosaceus (strain ATCC 25745 / CCUG 21536 / LMG 10740 / 183-1w)</name>
    <dbReference type="NCBI Taxonomy" id="278197"/>
    <lineage>
        <taxon>Bacteria</taxon>
        <taxon>Bacillati</taxon>
        <taxon>Bacillota</taxon>
        <taxon>Bacilli</taxon>
        <taxon>Lactobacillales</taxon>
        <taxon>Lactobacillaceae</taxon>
        <taxon>Pediococcus</taxon>
    </lineage>
</organism>
<name>TMCAL_PEDPA</name>
<protein>
    <recommendedName>
        <fullName evidence="1">tRNA(Met) cytidine acetate ligase</fullName>
        <ecNumber evidence="1">6.3.4.-</ecNumber>
    </recommendedName>
</protein>
<evidence type="ECO:0000255" key="1">
    <source>
        <dbReference type="HAMAP-Rule" id="MF_01539"/>
    </source>
</evidence>
<proteinExistence type="inferred from homology"/>
<gene>
    <name evidence="1" type="primary">tmcAL</name>
    <name type="ordered locus">PEPE_0710</name>
</gene>
<reference key="1">
    <citation type="journal article" date="2006" name="Proc. Natl. Acad. Sci. U.S.A.">
        <title>Comparative genomics of the lactic acid bacteria.</title>
        <authorList>
            <person name="Makarova K.S."/>
            <person name="Slesarev A."/>
            <person name="Wolf Y.I."/>
            <person name="Sorokin A."/>
            <person name="Mirkin B."/>
            <person name="Koonin E.V."/>
            <person name="Pavlov A."/>
            <person name="Pavlova N."/>
            <person name="Karamychev V."/>
            <person name="Polouchine N."/>
            <person name="Shakhova V."/>
            <person name="Grigoriev I."/>
            <person name="Lou Y."/>
            <person name="Rohksar D."/>
            <person name="Lucas S."/>
            <person name="Huang K."/>
            <person name="Goodstein D.M."/>
            <person name="Hawkins T."/>
            <person name="Plengvidhya V."/>
            <person name="Welker D."/>
            <person name="Hughes J."/>
            <person name="Goh Y."/>
            <person name="Benson A."/>
            <person name="Baldwin K."/>
            <person name="Lee J.-H."/>
            <person name="Diaz-Muniz I."/>
            <person name="Dosti B."/>
            <person name="Smeianov V."/>
            <person name="Wechter W."/>
            <person name="Barabote R."/>
            <person name="Lorca G."/>
            <person name="Altermann E."/>
            <person name="Barrangou R."/>
            <person name="Ganesan B."/>
            <person name="Xie Y."/>
            <person name="Rawsthorne H."/>
            <person name="Tamir D."/>
            <person name="Parker C."/>
            <person name="Breidt F."/>
            <person name="Broadbent J.R."/>
            <person name="Hutkins R."/>
            <person name="O'Sullivan D."/>
            <person name="Steele J."/>
            <person name="Unlu G."/>
            <person name="Saier M.H. Jr."/>
            <person name="Klaenhammer T."/>
            <person name="Richardson P."/>
            <person name="Kozyavkin S."/>
            <person name="Weimer B.C."/>
            <person name="Mills D.A."/>
        </authorList>
    </citation>
    <scope>NUCLEOTIDE SEQUENCE [LARGE SCALE GENOMIC DNA]</scope>
    <source>
        <strain>ATCC 25745 / CCUG 21536 / LMG 10740 / 183-1w</strain>
    </source>
</reference>
<dbReference type="EC" id="6.3.4.-" evidence="1"/>
<dbReference type="EMBL" id="CP000422">
    <property type="protein sequence ID" value="ABJ67771.1"/>
    <property type="molecule type" value="Genomic_DNA"/>
</dbReference>
<dbReference type="RefSeq" id="WP_002833810.1">
    <property type="nucleotide sequence ID" value="NC_008525.1"/>
</dbReference>
<dbReference type="SMR" id="Q03GA1"/>
<dbReference type="STRING" id="278197.PEPE_0710"/>
<dbReference type="GeneID" id="33061727"/>
<dbReference type="KEGG" id="ppe:PEPE_0710"/>
<dbReference type="eggNOG" id="COG1323">
    <property type="taxonomic scope" value="Bacteria"/>
</dbReference>
<dbReference type="HOGENOM" id="CLU_038915_0_2_9"/>
<dbReference type="OrthoDB" id="9769796at2"/>
<dbReference type="Proteomes" id="UP000000773">
    <property type="component" value="Chromosome"/>
</dbReference>
<dbReference type="GO" id="GO:0005737">
    <property type="term" value="C:cytoplasm"/>
    <property type="evidence" value="ECO:0007669"/>
    <property type="project" value="UniProtKB-SubCell"/>
</dbReference>
<dbReference type="GO" id="GO:0005524">
    <property type="term" value="F:ATP binding"/>
    <property type="evidence" value="ECO:0007669"/>
    <property type="project" value="UniProtKB-KW"/>
</dbReference>
<dbReference type="GO" id="GO:0016879">
    <property type="term" value="F:ligase activity, forming carbon-nitrogen bonds"/>
    <property type="evidence" value="ECO:0007669"/>
    <property type="project" value="UniProtKB-UniRule"/>
</dbReference>
<dbReference type="GO" id="GO:0000049">
    <property type="term" value="F:tRNA binding"/>
    <property type="evidence" value="ECO:0007669"/>
    <property type="project" value="UniProtKB-KW"/>
</dbReference>
<dbReference type="GO" id="GO:0006400">
    <property type="term" value="P:tRNA modification"/>
    <property type="evidence" value="ECO:0007669"/>
    <property type="project" value="UniProtKB-UniRule"/>
</dbReference>
<dbReference type="Gene3D" id="3.40.50.620">
    <property type="entry name" value="HUPs"/>
    <property type="match status" value="1"/>
</dbReference>
<dbReference type="HAMAP" id="MF_01539">
    <property type="entry name" value="TmcAL"/>
    <property type="match status" value="1"/>
</dbReference>
<dbReference type="InterPro" id="IPR004821">
    <property type="entry name" value="Cyt_trans-like"/>
</dbReference>
<dbReference type="InterPro" id="IPR014729">
    <property type="entry name" value="Rossmann-like_a/b/a_fold"/>
</dbReference>
<dbReference type="InterPro" id="IPR008513">
    <property type="entry name" value="tRNA(Met)_cyd_acetate_ligase"/>
</dbReference>
<dbReference type="NCBIfam" id="TIGR00125">
    <property type="entry name" value="cyt_tran_rel"/>
    <property type="match status" value="1"/>
</dbReference>
<dbReference type="PANTHER" id="PTHR37825">
    <property type="entry name" value="TRNA(MET) CYTIDINE ACETATE LIGASE"/>
    <property type="match status" value="1"/>
</dbReference>
<dbReference type="PANTHER" id="PTHR37825:SF1">
    <property type="entry name" value="TRNA(MET) CYTIDINE ACETATE LIGASE"/>
    <property type="match status" value="1"/>
</dbReference>
<dbReference type="Pfam" id="PF05636">
    <property type="entry name" value="HIGH_NTase1"/>
    <property type="match status" value="1"/>
</dbReference>
<dbReference type="SUPFAM" id="SSF52374">
    <property type="entry name" value="Nucleotidylyl transferase"/>
    <property type="match status" value="1"/>
</dbReference>
<feature type="chain" id="PRO_0000292801" description="tRNA(Met) cytidine acetate ligase">
    <location>
        <begin position="1"/>
        <end position="366"/>
    </location>
</feature>
<feature type="binding site" evidence="1">
    <location>
        <begin position="7"/>
        <end position="20"/>
    </location>
    <ligand>
        <name>ATP</name>
        <dbReference type="ChEBI" id="CHEBI:30616"/>
    </ligand>
</feature>
<feature type="binding site" evidence="1">
    <location>
        <position position="101"/>
    </location>
    <ligand>
        <name>ATP</name>
        <dbReference type="ChEBI" id="CHEBI:30616"/>
    </ligand>
</feature>
<feature type="binding site" evidence="1">
    <location>
        <position position="145"/>
    </location>
    <ligand>
        <name>ATP</name>
        <dbReference type="ChEBI" id="CHEBI:30616"/>
    </ligand>
</feature>
<feature type="binding site" evidence="1">
    <location>
        <position position="170"/>
    </location>
    <ligand>
        <name>ATP</name>
        <dbReference type="ChEBI" id="CHEBI:30616"/>
    </ligand>
</feature>